<name>SCR1G_ACRMI</name>
<comment type="function">
    <text evidence="1 2 6">Induces neurotoxic symptoms on zebrafish (By similarity). Has also been claimed to be implied in calcification, but tests on homolog proteins suggest that proteins of this family have a neurotoxic function and not a calcification function (PubMed:19283069).</text>
</comment>
<comment type="subcellular location">
    <subcellularLocation>
        <location>Secreted</location>
    </subcellularLocation>
    <subcellularLocation>
        <location evidence="5">Nematocyst</location>
    </subcellularLocation>
</comment>
<comment type="PTM">
    <text evidence="5">Contains 4 disulfide bonds.</text>
</comment>
<comment type="miscellaneous">
    <text>The sequence shown here is derived from an EMBL/GenBank/DDBJ third party annotation (TPA) entry.</text>
</comment>
<comment type="similarity">
    <text evidence="7">Belongs to the Cnidaria small cysteine-rich protein (SCRiP) family. gamma subfamily.</text>
</comment>
<reference key="1">
    <citation type="journal article" date="2009" name="PLoS ONE">
        <title>Identification and gene expression analysis of a taxonomically restricted cysteine-rich protein family in reef-building corals.</title>
        <authorList>
            <person name="Sunagawa S."/>
            <person name="DeSalvo M.K."/>
            <person name="Voolstra C.R."/>
            <person name="Reyes-Bermudez A."/>
            <person name="Medina M."/>
        </authorList>
    </citation>
    <scope>NUCLEOTIDE SEQUENCE [MRNA]</scope>
</reference>
<reference key="2">
    <citation type="journal article" date="2024" name="Toxins">
        <title>Evolutionary analysis of cnidaria small cysteine-rich proteins (scrips), an enigmatic neurotoxin family from stony corals and sea anemones (Anthozoa: Hexacorallia).</title>
        <authorList>
            <person name="Barroso R.A."/>
            <person name="Ramos L."/>
            <person name="Moreno H."/>
            <person name="Antunes A."/>
        </authorList>
    </citation>
    <scope>NOMENCLATURE</scope>
</reference>
<dbReference type="EMBL" id="BK006534">
    <property type="protein sequence ID" value="DAA06482.1"/>
    <property type="molecule type" value="mRNA"/>
</dbReference>
<dbReference type="SMR" id="C0H690"/>
<dbReference type="OrthoDB" id="5957099at2759"/>
<dbReference type="GO" id="GO:0005576">
    <property type="term" value="C:extracellular region"/>
    <property type="evidence" value="ECO:0007669"/>
    <property type="project" value="UniProtKB-SubCell"/>
</dbReference>
<dbReference type="GO" id="GO:0042151">
    <property type="term" value="C:nematocyst"/>
    <property type="evidence" value="ECO:0007669"/>
    <property type="project" value="UniProtKB-SubCell"/>
</dbReference>
<dbReference type="GO" id="GO:0090729">
    <property type="term" value="F:toxin activity"/>
    <property type="evidence" value="ECO:0007669"/>
    <property type="project" value="UniProtKB-KW"/>
</dbReference>
<sequence>MDVRFRLCLFLVILVIVANANVIKEPEKRFHPNLWRPPRCDWPHGVCSYIRDRCAPDTPFPCGPIFACPLPTNKCCCRRPYLPPWAGRR</sequence>
<feature type="signal peptide" evidence="3">
    <location>
        <begin position="1"/>
        <end position="20"/>
    </location>
</feature>
<feature type="propeptide" id="PRO_0000434295" evidence="5">
    <location>
        <begin position="21"/>
        <end position="27"/>
    </location>
</feature>
<feature type="chain" id="PRO_0000434296" description="Small cysteine-rich protein 1">
    <location>
        <begin position="30"/>
        <end position="89"/>
    </location>
</feature>
<proteinExistence type="inferred from homology"/>
<keyword id="KW-0165">Cleavage on pair of basic residues</keyword>
<keyword id="KW-1015">Disulfide bond</keyword>
<keyword id="KW-0166">Nematocyst</keyword>
<keyword id="KW-0528">Neurotoxin</keyword>
<keyword id="KW-0964">Secreted</keyword>
<keyword id="KW-0732">Signal</keyword>
<keyword id="KW-0800">Toxin</keyword>
<accession>C0H690</accession>
<protein>
    <recommendedName>
        <fullName evidence="4">Small cysteine-rich protein 1</fullName>
        <shortName evidence="4">Amil-SCRiP1</shortName>
        <shortName evidence="4">SCRiP1</shortName>
    </recommendedName>
</protein>
<organism>
    <name type="scientific">Acropora millepora</name>
    <name type="common">Staghorn coral</name>
    <name type="synonym">Heteropora millepora</name>
    <dbReference type="NCBI Taxonomy" id="45264"/>
    <lineage>
        <taxon>Eukaryota</taxon>
        <taxon>Metazoa</taxon>
        <taxon>Cnidaria</taxon>
        <taxon>Anthozoa</taxon>
        <taxon>Hexacorallia</taxon>
        <taxon>Scleractinia</taxon>
        <taxon>Astrocoeniina</taxon>
        <taxon>Acroporidae</taxon>
        <taxon>Acropora</taxon>
    </lineage>
</organism>
<evidence type="ECO:0000250" key="1">
    <source>
        <dbReference type="UniProtKB" id="C0H691"/>
    </source>
</evidence>
<evidence type="ECO:0000250" key="2">
    <source>
        <dbReference type="UniProtKB" id="C0H692"/>
    </source>
</evidence>
<evidence type="ECO:0000255" key="3"/>
<evidence type="ECO:0000303" key="4">
    <source>
    </source>
</evidence>
<evidence type="ECO:0000305" key="5"/>
<evidence type="ECO:0000305" key="6">
    <source>
    </source>
</evidence>
<evidence type="ECO:0000305" key="7">
    <source>
    </source>
</evidence>